<dbReference type="EC" id="3.6.1.23" evidence="1"/>
<dbReference type="EMBL" id="CP001291">
    <property type="protein sequence ID" value="ACK69186.1"/>
    <property type="molecule type" value="Genomic_DNA"/>
</dbReference>
<dbReference type="RefSeq" id="WP_012598133.1">
    <property type="nucleotide sequence ID" value="NC_011729.1"/>
</dbReference>
<dbReference type="SMR" id="B7KFZ3"/>
<dbReference type="STRING" id="65393.PCC7424_0730"/>
<dbReference type="KEGG" id="cyc:PCC7424_0730"/>
<dbReference type="eggNOG" id="COG0756">
    <property type="taxonomic scope" value="Bacteria"/>
</dbReference>
<dbReference type="HOGENOM" id="CLU_068508_1_2_3"/>
<dbReference type="OrthoDB" id="9809956at2"/>
<dbReference type="UniPathway" id="UPA00610">
    <property type="reaction ID" value="UER00666"/>
</dbReference>
<dbReference type="Proteomes" id="UP000002384">
    <property type="component" value="Chromosome"/>
</dbReference>
<dbReference type="GO" id="GO:0004170">
    <property type="term" value="F:dUTP diphosphatase activity"/>
    <property type="evidence" value="ECO:0007669"/>
    <property type="project" value="UniProtKB-UniRule"/>
</dbReference>
<dbReference type="GO" id="GO:0000287">
    <property type="term" value="F:magnesium ion binding"/>
    <property type="evidence" value="ECO:0007669"/>
    <property type="project" value="UniProtKB-UniRule"/>
</dbReference>
<dbReference type="GO" id="GO:0006226">
    <property type="term" value="P:dUMP biosynthetic process"/>
    <property type="evidence" value="ECO:0007669"/>
    <property type="project" value="UniProtKB-UniRule"/>
</dbReference>
<dbReference type="GO" id="GO:0046081">
    <property type="term" value="P:dUTP catabolic process"/>
    <property type="evidence" value="ECO:0007669"/>
    <property type="project" value="InterPro"/>
</dbReference>
<dbReference type="CDD" id="cd07557">
    <property type="entry name" value="trimeric_dUTPase"/>
    <property type="match status" value="1"/>
</dbReference>
<dbReference type="Gene3D" id="2.70.40.10">
    <property type="match status" value="1"/>
</dbReference>
<dbReference type="HAMAP" id="MF_00116">
    <property type="entry name" value="dUTPase_bact"/>
    <property type="match status" value="1"/>
</dbReference>
<dbReference type="InterPro" id="IPR008181">
    <property type="entry name" value="dUTPase"/>
</dbReference>
<dbReference type="InterPro" id="IPR029054">
    <property type="entry name" value="dUTPase-like"/>
</dbReference>
<dbReference type="InterPro" id="IPR036157">
    <property type="entry name" value="dUTPase-like_sf"/>
</dbReference>
<dbReference type="InterPro" id="IPR033704">
    <property type="entry name" value="dUTPase_trimeric"/>
</dbReference>
<dbReference type="NCBIfam" id="TIGR00576">
    <property type="entry name" value="dut"/>
    <property type="match status" value="1"/>
</dbReference>
<dbReference type="NCBIfam" id="NF001862">
    <property type="entry name" value="PRK00601.1"/>
    <property type="match status" value="1"/>
</dbReference>
<dbReference type="PANTHER" id="PTHR11241">
    <property type="entry name" value="DEOXYURIDINE 5'-TRIPHOSPHATE NUCLEOTIDOHYDROLASE"/>
    <property type="match status" value="1"/>
</dbReference>
<dbReference type="PANTHER" id="PTHR11241:SF0">
    <property type="entry name" value="DEOXYURIDINE 5'-TRIPHOSPHATE NUCLEOTIDOHYDROLASE"/>
    <property type="match status" value="1"/>
</dbReference>
<dbReference type="Pfam" id="PF00692">
    <property type="entry name" value="dUTPase"/>
    <property type="match status" value="1"/>
</dbReference>
<dbReference type="SUPFAM" id="SSF51283">
    <property type="entry name" value="dUTPase-like"/>
    <property type="match status" value="1"/>
</dbReference>
<keyword id="KW-0378">Hydrolase</keyword>
<keyword id="KW-0460">Magnesium</keyword>
<keyword id="KW-0479">Metal-binding</keyword>
<keyword id="KW-0546">Nucleotide metabolism</keyword>
<keyword id="KW-1185">Reference proteome</keyword>
<name>DUT_GLOC7</name>
<proteinExistence type="inferred from homology"/>
<reference key="1">
    <citation type="journal article" date="2011" name="MBio">
        <title>Novel metabolic attributes of the genus Cyanothece, comprising a group of unicellular nitrogen-fixing Cyanobacteria.</title>
        <authorList>
            <person name="Bandyopadhyay A."/>
            <person name="Elvitigala T."/>
            <person name="Welsh E."/>
            <person name="Stockel J."/>
            <person name="Liberton M."/>
            <person name="Min H."/>
            <person name="Sherman L.A."/>
            <person name="Pakrasi H.B."/>
        </authorList>
    </citation>
    <scope>NUCLEOTIDE SEQUENCE [LARGE SCALE GENOMIC DNA]</scope>
    <source>
        <strain>PCC 7424</strain>
    </source>
</reference>
<accession>B7KFZ3</accession>
<comment type="function">
    <text evidence="1">This enzyme is involved in nucleotide metabolism: it produces dUMP, the immediate precursor of thymidine nucleotides and it decreases the intracellular concentration of dUTP so that uracil cannot be incorporated into DNA.</text>
</comment>
<comment type="catalytic activity">
    <reaction evidence="1">
        <text>dUTP + H2O = dUMP + diphosphate + H(+)</text>
        <dbReference type="Rhea" id="RHEA:10248"/>
        <dbReference type="ChEBI" id="CHEBI:15377"/>
        <dbReference type="ChEBI" id="CHEBI:15378"/>
        <dbReference type="ChEBI" id="CHEBI:33019"/>
        <dbReference type="ChEBI" id="CHEBI:61555"/>
        <dbReference type="ChEBI" id="CHEBI:246422"/>
        <dbReference type="EC" id="3.6.1.23"/>
    </reaction>
</comment>
<comment type="cofactor">
    <cofactor evidence="1">
        <name>Mg(2+)</name>
        <dbReference type="ChEBI" id="CHEBI:18420"/>
    </cofactor>
</comment>
<comment type="pathway">
    <text evidence="1">Pyrimidine metabolism; dUMP biosynthesis; dUMP from dCTP (dUTP route): step 2/2.</text>
</comment>
<comment type="similarity">
    <text evidence="1">Belongs to the dUTPase family.</text>
</comment>
<feature type="chain" id="PRO_1000117563" description="Deoxyuridine 5'-triphosphate nucleotidohydrolase">
    <location>
        <begin position="1"/>
        <end position="145"/>
    </location>
</feature>
<feature type="binding site" evidence="1">
    <location>
        <begin position="62"/>
        <end position="64"/>
    </location>
    <ligand>
        <name>substrate</name>
    </ligand>
</feature>
<feature type="binding site" evidence="1">
    <location>
        <position position="75"/>
    </location>
    <ligand>
        <name>substrate</name>
    </ligand>
</feature>
<feature type="binding site" evidence="1">
    <location>
        <begin position="79"/>
        <end position="81"/>
    </location>
    <ligand>
        <name>substrate</name>
    </ligand>
</feature>
<organism>
    <name type="scientific">Gloeothece citriformis (strain PCC 7424)</name>
    <name type="common">Cyanothece sp. (strain PCC 7424)</name>
    <dbReference type="NCBI Taxonomy" id="65393"/>
    <lineage>
        <taxon>Bacteria</taxon>
        <taxon>Bacillati</taxon>
        <taxon>Cyanobacteriota</taxon>
        <taxon>Cyanophyceae</taxon>
        <taxon>Oscillatoriophycideae</taxon>
        <taxon>Chroococcales</taxon>
        <taxon>Aphanothecaceae</taxon>
        <taxon>Gloeothece</taxon>
        <taxon>Gloeothece citriformis</taxon>
    </lineage>
</organism>
<protein>
    <recommendedName>
        <fullName evidence="1">Deoxyuridine 5'-triphosphate nucleotidohydrolase</fullName>
        <shortName evidence="1">dUTPase</shortName>
        <ecNumber evidence="1">3.6.1.23</ecNumber>
    </recommendedName>
    <alternativeName>
        <fullName evidence="1">dUTP pyrophosphatase</fullName>
    </alternativeName>
</protein>
<gene>
    <name evidence="1" type="primary">dut</name>
    <name type="ordered locus">PCC7424_0730</name>
</gene>
<evidence type="ECO:0000255" key="1">
    <source>
        <dbReference type="HAMAP-Rule" id="MF_00116"/>
    </source>
</evidence>
<sequence length="145" mass="15508">MKLKVTKLEKAAILPKYVHSDDSGLDLSAIEDLEIPPGESQLVPTGIAIELPPNTEAQIRPRSGLALKHQITVLNTPGTVDEGYRGEIGVILINHGKNSFKVTRGMKIAQMVIAPVIRVEVEEVDHLSDTTRGSGGFGSTGLTSD</sequence>